<proteinExistence type="inferred from homology"/>
<gene>
    <name evidence="1" type="primary">gcvPA</name>
    <name type="ordered locus">Tbd_0176</name>
</gene>
<comment type="function">
    <text evidence="1">The glycine cleavage system catalyzes the degradation of glycine. The P protein binds the alpha-amino group of glycine through its pyridoxal phosphate cofactor; CO(2) is released and the remaining methylamine moiety is then transferred to the lipoamide cofactor of the H protein.</text>
</comment>
<comment type="catalytic activity">
    <reaction evidence="1">
        <text>N(6)-[(R)-lipoyl]-L-lysyl-[glycine-cleavage complex H protein] + glycine + H(+) = N(6)-[(R)-S(8)-aminomethyldihydrolipoyl]-L-lysyl-[glycine-cleavage complex H protein] + CO2</text>
        <dbReference type="Rhea" id="RHEA:24304"/>
        <dbReference type="Rhea" id="RHEA-COMP:10494"/>
        <dbReference type="Rhea" id="RHEA-COMP:10495"/>
        <dbReference type="ChEBI" id="CHEBI:15378"/>
        <dbReference type="ChEBI" id="CHEBI:16526"/>
        <dbReference type="ChEBI" id="CHEBI:57305"/>
        <dbReference type="ChEBI" id="CHEBI:83099"/>
        <dbReference type="ChEBI" id="CHEBI:83143"/>
        <dbReference type="EC" id="1.4.4.2"/>
    </reaction>
</comment>
<comment type="subunit">
    <text evidence="1">The glycine cleavage system is composed of four proteins: P, T, L and H. In this organism, the P 'protein' is a heterodimer of two subunits.</text>
</comment>
<comment type="similarity">
    <text evidence="1">Belongs to the GcvP family. N-terminal subunit subfamily.</text>
</comment>
<reference key="1">
    <citation type="journal article" date="2006" name="J. Bacteriol.">
        <title>The genome sequence of the obligately chemolithoautotrophic, facultatively anaerobic bacterium Thiobacillus denitrificans.</title>
        <authorList>
            <person name="Beller H.R."/>
            <person name="Chain P.S."/>
            <person name="Letain T.E."/>
            <person name="Chakicherla A."/>
            <person name="Larimer F.W."/>
            <person name="Richardson P.M."/>
            <person name="Coleman M.A."/>
            <person name="Wood A.P."/>
            <person name="Kelly D.P."/>
        </authorList>
    </citation>
    <scope>NUCLEOTIDE SEQUENCE [LARGE SCALE GENOMIC DNA]</scope>
    <source>
        <strain>ATCC 25259 / T1</strain>
    </source>
</reference>
<feature type="chain" id="PRO_1000045685" description="Probable glycine dehydrogenase (decarboxylating) subunit 1">
    <location>
        <begin position="1"/>
        <end position="464"/>
    </location>
</feature>
<dbReference type="EC" id="1.4.4.2" evidence="1"/>
<dbReference type="EMBL" id="CP000116">
    <property type="protein sequence ID" value="AAZ96129.1"/>
    <property type="molecule type" value="Genomic_DNA"/>
</dbReference>
<dbReference type="RefSeq" id="WP_011310689.1">
    <property type="nucleotide sequence ID" value="NC_007404.1"/>
</dbReference>
<dbReference type="SMR" id="Q3SMB8"/>
<dbReference type="STRING" id="292415.Tbd_0176"/>
<dbReference type="KEGG" id="tbd:Tbd_0176"/>
<dbReference type="eggNOG" id="COG0403">
    <property type="taxonomic scope" value="Bacteria"/>
</dbReference>
<dbReference type="HOGENOM" id="CLU_004620_0_2_4"/>
<dbReference type="OrthoDB" id="9801272at2"/>
<dbReference type="Proteomes" id="UP000008291">
    <property type="component" value="Chromosome"/>
</dbReference>
<dbReference type="GO" id="GO:0004375">
    <property type="term" value="F:glycine dehydrogenase (decarboxylating) activity"/>
    <property type="evidence" value="ECO:0007669"/>
    <property type="project" value="UniProtKB-EC"/>
</dbReference>
<dbReference type="GO" id="GO:0019464">
    <property type="term" value="P:glycine decarboxylation via glycine cleavage system"/>
    <property type="evidence" value="ECO:0007669"/>
    <property type="project" value="UniProtKB-UniRule"/>
</dbReference>
<dbReference type="GO" id="GO:0009116">
    <property type="term" value="P:nucleoside metabolic process"/>
    <property type="evidence" value="ECO:0007669"/>
    <property type="project" value="InterPro"/>
</dbReference>
<dbReference type="CDD" id="cd00613">
    <property type="entry name" value="GDC-P"/>
    <property type="match status" value="1"/>
</dbReference>
<dbReference type="Gene3D" id="3.90.1150.10">
    <property type="entry name" value="Aspartate Aminotransferase, domain 1"/>
    <property type="match status" value="1"/>
</dbReference>
<dbReference type="Gene3D" id="3.40.640.10">
    <property type="entry name" value="Type I PLP-dependent aspartate aminotransferase-like (Major domain)"/>
    <property type="match status" value="1"/>
</dbReference>
<dbReference type="HAMAP" id="MF_00712">
    <property type="entry name" value="GcvPA"/>
    <property type="match status" value="1"/>
</dbReference>
<dbReference type="InterPro" id="IPR023010">
    <property type="entry name" value="GcvPA"/>
</dbReference>
<dbReference type="InterPro" id="IPR049315">
    <property type="entry name" value="GDC-P_N"/>
</dbReference>
<dbReference type="InterPro" id="IPR020581">
    <property type="entry name" value="GDC_P"/>
</dbReference>
<dbReference type="InterPro" id="IPR015424">
    <property type="entry name" value="PyrdxlP-dep_Trfase"/>
</dbReference>
<dbReference type="InterPro" id="IPR015421">
    <property type="entry name" value="PyrdxlP-dep_Trfase_major"/>
</dbReference>
<dbReference type="InterPro" id="IPR015422">
    <property type="entry name" value="PyrdxlP-dep_Trfase_small"/>
</dbReference>
<dbReference type="NCBIfam" id="NF001696">
    <property type="entry name" value="PRK00451.1"/>
    <property type="match status" value="1"/>
</dbReference>
<dbReference type="PANTHER" id="PTHR42806">
    <property type="entry name" value="GLYCINE CLEAVAGE SYSTEM P-PROTEIN"/>
    <property type="match status" value="1"/>
</dbReference>
<dbReference type="PANTHER" id="PTHR42806:SF1">
    <property type="entry name" value="GLYCINE DEHYDROGENASE (DECARBOXYLATING)"/>
    <property type="match status" value="1"/>
</dbReference>
<dbReference type="Pfam" id="PF02347">
    <property type="entry name" value="GDC-P"/>
    <property type="match status" value="1"/>
</dbReference>
<dbReference type="PIRSF" id="PIRSF006815">
    <property type="entry name" value="GcvPA"/>
    <property type="match status" value="1"/>
</dbReference>
<dbReference type="SUPFAM" id="SSF53383">
    <property type="entry name" value="PLP-dependent transferases"/>
    <property type="match status" value="1"/>
</dbReference>
<evidence type="ECO:0000255" key="1">
    <source>
        <dbReference type="HAMAP-Rule" id="MF_00712"/>
    </source>
</evidence>
<protein>
    <recommendedName>
        <fullName evidence="1">Probable glycine dehydrogenase (decarboxylating) subunit 1</fullName>
        <ecNumber evidence="1">1.4.4.2</ecNumber>
    </recommendedName>
    <alternativeName>
        <fullName evidence="1">Glycine cleavage system P-protein subunit 1</fullName>
    </alternativeName>
    <alternativeName>
        <fullName evidence="1">Glycine decarboxylase subunit 1</fullName>
    </alternativeName>
    <alternativeName>
        <fullName evidence="1">Glycine dehydrogenase (aminomethyl-transferring) subunit 1</fullName>
    </alternativeName>
</protein>
<keyword id="KW-0560">Oxidoreductase</keyword>
<keyword id="KW-1185">Reference proteome</keyword>
<organism>
    <name type="scientific">Thiobacillus denitrificans (strain ATCC 25259 / T1)</name>
    <dbReference type="NCBI Taxonomy" id="292415"/>
    <lineage>
        <taxon>Bacteria</taxon>
        <taxon>Pseudomonadati</taxon>
        <taxon>Pseudomonadota</taxon>
        <taxon>Betaproteobacteria</taxon>
        <taxon>Nitrosomonadales</taxon>
        <taxon>Thiobacillaceae</taxon>
        <taxon>Thiobacillus</taxon>
    </lineage>
</organism>
<accession>Q3SMB8</accession>
<name>GCSPA_THIDA</name>
<sequence length="464" mass="49680">MPFIPHTEEDVSAMLGAIGAASIEDLFDEIPPALKTGKLKDVPDGLPEMAVARLMQERASQDGFWSNFIGAGVYEHHIPAAIWQITTRGEFYSAYTPYQAEASQGTLQLIYEYQTMMTRLTGLDVSNASLYDGASALAEAVLMAVRSHKSSRRVLVPKTVHPVYRSVVVTTVRNQGIDLVELEYDPATGKTVLPSEPGAFAGLVIPQPNFFGVLEDVHTMTDWTHANGGLAIALVNPTTLAVLEAPGKWGTKGADIAVGEGQPLGAPMASGGPYFGFMCCRQDFVRQMPGRIVGRTVDLDGKPGFALTLQAREQHIRRSKATSNICTNQGLVVTAATQYMALLGPQGLAKVAAASHANTVALAEKLGAIPGVARAFASPCFHEVVLKLDDGTLKGTSAKDVLRALRAQGILGGLDISGWYPELGQAILVCVTETKTGADLDHYAQHLERILSKRREAPPCAYKN</sequence>